<reference key="1">
    <citation type="journal article" date="2007" name="Science">
        <title>Legumes symbioses: absence of nod genes in photosynthetic bradyrhizobia.</title>
        <authorList>
            <person name="Giraud E."/>
            <person name="Moulin L."/>
            <person name="Vallenet D."/>
            <person name="Barbe V."/>
            <person name="Cytryn E."/>
            <person name="Avarre J.-C."/>
            <person name="Jaubert M."/>
            <person name="Simon D."/>
            <person name="Cartieaux F."/>
            <person name="Prin Y."/>
            <person name="Bena G."/>
            <person name="Hannibal L."/>
            <person name="Fardoux J."/>
            <person name="Kojadinovic M."/>
            <person name="Vuillet L."/>
            <person name="Lajus A."/>
            <person name="Cruveiller S."/>
            <person name="Rouy Z."/>
            <person name="Mangenot S."/>
            <person name="Segurens B."/>
            <person name="Dossat C."/>
            <person name="Franck W.L."/>
            <person name="Chang W.-S."/>
            <person name="Saunders E."/>
            <person name="Bruce D."/>
            <person name="Richardson P."/>
            <person name="Normand P."/>
            <person name="Dreyfus B."/>
            <person name="Pignol D."/>
            <person name="Stacey G."/>
            <person name="Emerich D."/>
            <person name="Vermeglio A."/>
            <person name="Medigue C."/>
            <person name="Sadowsky M."/>
        </authorList>
    </citation>
    <scope>NUCLEOTIDE SEQUENCE [LARGE SCALE GENOMIC DNA]</scope>
    <source>
        <strain>BTAi1 / ATCC BAA-1182</strain>
    </source>
</reference>
<feature type="chain" id="PRO_1000019188" description="Enolase">
    <location>
        <begin position="1"/>
        <end position="427"/>
    </location>
</feature>
<feature type="active site" description="Proton donor" evidence="1">
    <location>
        <position position="205"/>
    </location>
</feature>
<feature type="active site" description="Proton acceptor" evidence="1">
    <location>
        <position position="337"/>
    </location>
</feature>
<feature type="binding site" evidence="1">
    <location>
        <position position="163"/>
    </location>
    <ligand>
        <name>(2R)-2-phosphoglycerate</name>
        <dbReference type="ChEBI" id="CHEBI:58289"/>
    </ligand>
</feature>
<feature type="binding site" evidence="1">
    <location>
        <position position="242"/>
    </location>
    <ligand>
        <name>Mg(2+)</name>
        <dbReference type="ChEBI" id="CHEBI:18420"/>
    </ligand>
</feature>
<feature type="binding site" evidence="1">
    <location>
        <position position="285"/>
    </location>
    <ligand>
        <name>Mg(2+)</name>
        <dbReference type="ChEBI" id="CHEBI:18420"/>
    </ligand>
</feature>
<feature type="binding site" evidence="1">
    <location>
        <position position="312"/>
    </location>
    <ligand>
        <name>Mg(2+)</name>
        <dbReference type="ChEBI" id="CHEBI:18420"/>
    </ligand>
</feature>
<feature type="binding site" evidence="1">
    <location>
        <position position="337"/>
    </location>
    <ligand>
        <name>(2R)-2-phosphoglycerate</name>
        <dbReference type="ChEBI" id="CHEBI:58289"/>
    </ligand>
</feature>
<feature type="binding site" evidence="1">
    <location>
        <position position="366"/>
    </location>
    <ligand>
        <name>(2R)-2-phosphoglycerate</name>
        <dbReference type="ChEBI" id="CHEBI:58289"/>
    </ligand>
</feature>
<feature type="binding site" evidence="1">
    <location>
        <position position="367"/>
    </location>
    <ligand>
        <name>(2R)-2-phosphoglycerate</name>
        <dbReference type="ChEBI" id="CHEBI:58289"/>
    </ligand>
</feature>
<feature type="binding site" evidence="1">
    <location>
        <position position="388"/>
    </location>
    <ligand>
        <name>(2R)-2-phosphoglycerate</name>
        <dbReference type="ChEBI" id="CHEBI:58289"/>
    </ligand>
</feature>
<protein>
    <recommendedName>
        <fullName evidence="1">Enolase</fullName>
        <ecNumber evidence="1">4.2.1.11</ecNumber>
    </recommendedName>
    <alternativeName>
        <fullName evidence="1">2-phospho-D-glycerate hydro-lyase</fullName>
    </alternativeName>
    <alternativeName>
        <fullName evidence="1">2-phosphoglycerate dehydratase</fullName>
    </alternativeName>
</protein>
<keyword id="KW-0963">Cytoplasm</keyword>
<keyword id="KW-0324">Glycolysis</keyword>
<keyword id="KW-0456">Lyase</keyword>
<keyword id="KW-0460">Magnesium</keyword>
<keyword id="KW-0479">Metal-binding</keyword>
<keyword id="KW-1185">Reference proteome</keyword>
<keyword id="KW-0964">Secreted</keyword>
<dbReference type="EC" id="4.2.1.11" evidence="1"/>
<dbReference type="EMBL" id="CP000494">
    <property type="protein sequence ID" value="ABQ36507.1"/>
    <property type="molecule type" value="Genomic_DNA"/>
</dbReference>
<dbReference type="RefSeq" id="WP_012044503.1">
    <property type="nucleotide sequence ID" value="NC_009485.1"/>
</dbReference>
<dbReference type="SMR" id="A5EK13"/>
<dbReference type="STRING" id="288000.BBta_4471"/>
<dbReference type="KEGG" id="bbt:BBta_4471"/>
<dbReference type="eggNOG" id="COG0148">
    <property type="taxonomic scope" value="Bacteria"/>
</dbReference>
<dbReference type="HOGENOM" id="CLU_031223_2_1_5"/>
<dbReference type="OrthoDB" id="9804716at2"/>
<dbReference type="UniPathway" id="UPA00109">
    <property type="reaction ID" value="UER00187"/>
</dbReference>
<dbReference type="Proteomes" id="UP000000246">
    <property type="component" value="Chromosome"/>
</dbReference>
<dbReference type="GO" id="GO:0009986">
    <property type="term" value="C:cell surface"/>
    <property type="evidence" value="ECO:0007669"/>
    <property type="project" value="UniProtKB-SubCell"/>
</dbReference>
<dbReference type="GO" id="GO:0005576">
    <property type="term" value="C:extracellular region"/>
    <property type="evidence" value="ECO:0007669"/>
    <property type="project" value="UniProtKB-SubCell"/>
</dbReference>
<dbReference type="GO" id="GO:0000015">
    <property type="term" value="C:phosphopyruvate hydratase complex"/>
    <property type="evidence" value="ECO:0007669"/>
    <property type="project" value="InterPro"/>
</dbReference>
<dbReference type="GO" id="GO:0000287">
    <property type="term" value="F:magnesium ion binding"/>
    <property type="evidence" value="ECO:0007669"/>
    <property type="project" value="UniProtKB-UniRule"/>
</dbReference>
<dbReference type="GO" id="GO:0004634">
    <property type="term" value="F:phosphopyruvate hydratase activity"/>
    <property type="evidence" value="ECO:0007669"/>
    <property type="project" value="UniProtKB-UniRule"/>
</dbReference>
<dbReference type="GO" id="GO:0006096">
    <property type="term" value="P:glycolytic process"/>
    <property type="evidence" value="ECO:0007669"/>
    <property type="project" value="UniProtKB-UniRule"/>
</dbReference>
<dbReference type="CDD" id="cd03313">
    <property type="entry name" value="enolase"/>
    <property type="match status" value="1"/>
</dbReference>
<dbReference type="FunFam" id="3.20.20.120:FF:000001">
    <property type="entry name" value="Enolase"/>
    <property type="match status" value="1"/>
</dbReference>
<dbReference type="FunFam" id="3.30.390.10:FF:000001">
    <property type="entry name" value="Enolase"/>
    <property type="match status" value="1"/>
</dbReference>
<dbReference type="Gene3D" id="3.20.20.120">
    <property type="entry name" value="Enolase-like C-terminal domain"/>
    <property type="match status" value="1"/>
</dbReference>
<dbReference type="Gene3D" id="3.30.390.10">
    <property type="entry name" value="Enolase-like, N-terminal domain"/>
    <property type="match status" value="1"/>
</dbReference>
<dbReference type="HAMAP" id="MF_00318">
    <property type="entry name" value="Enolase"/>
    <property type="match status" value="1"/>
</dbReference>
<dbReference type="InterPro" id="IPR000941">
    <property type="entry name" value="Enolase"/>
</dbReference>
<dbReference type="InterPro" id="IPR036849">
    <property type="entry name" value="Enolase-like_C_sf"/>
</dbReference>
<dbReference type="InterPro" id="IPR029017">
    <property type="entry name" value="Enolase-like_N"/>
</dbReference>
<dbReference type="InterPro" id="IPR020810">
    <property type="entry name" value="Enolase_C"/>
</dbReference>
<dbReference type="InterPro" id="IPR020809">
    <property type="entry name" value="Enolase_CS"/>
</dbReference>
<dbReference type="InterPro" id="IPR020811">
    <property type="entry name" value="Enolase_N"/>
</dbReference>
<dbReference type="NCBIfam" id="TIGR01060">
    <property type="entry name" value="eno"/>
    <property type="match status" value="1"/>
</dbReference>
<dbReference type="PANTHER" id="PTHR11902">
    <property type="entry name" value="ENOLASE"/>
    <property type="match status" value="1"/>
</dbReference>
<dbReference type="PANTHER" id="PTHR11902:SF1">
    <property type="entry name" value="ENOLASE"/>
    <property type="match status" value="1"/>
</dbReference>
<dbReference type="Pfam" id="PF00113">
    <property type="entry name" value="Enolase_C"/>
    <property type="match status" value="1"/>
</dbReference>
<dbReference type="Pfam" id="PF03952">
    <property type="entry name" value="Enolase_N"/>
    <property type="match status" value="1"/>
</dbReference>
<dbReference type="PIRSF" id="PIRSF001400">
    <property type="entry name" value="Enolase"/>
    <property type="match status" value="1"/>
</dbReference>
<dbReference type="PRINTS" id="PR00148">
    <property type="entry name" value="ENOLASE"/>
</dbReference>
<dbReference type="SFLD" id="SFLDF00002">
    <property type="entry name" value="enolase"/>
    <property type="match status" value="1"/>
</dbReference>
<dbReference type="SFLD" id="SFLDG00178">
    <property type="entry name" value="enolase"/>
    <property type="match status" value="1"/>
</dbReference>
<dbReference type="SMART" id="SM01192">
    <property type="entry name" value="Enolase_C"/>
    <property type="match status" value="1"/>
</dbReference>
<dbReference type="SMART" id="SM01193">
    <property type="entry name" value="Enolase_N"/>
    <property type="match status" value="1"/>
</dbReference>
<dbReference type="SUPFAM" id="SSF51604">
    <property type="entry name" value="Enolase C-terminal domain-like"/>
    <property type="match status" value="1"/>
</dbReference>
<dbReference type="SUPFAM" id="SSF54826">
    <property type="entry name" value="Enolase N-terminal domain-like"/>
    <property type="match status" value="1"/>
</dbReference>
<dbReference type="PROSITE" id="PS00164">
    <property type="entry name" value="ENOLASE"/>
    <property type="match status" value="1"/>
</dbReference>
<organism>
    <name type="scientific">Bradyrhizobium sp. (strain BTAi1 / ATCC BAA-1182)</name>
    <dbReference type="NCBI Taxonomy" id="288000"/>
    <lineage>
        <taxon>Bacteria</taxon>
        <taxon>Pseudomonadati</taxon>
        <taxon>Pseudomonadota</taxon>
        <taxon>Alphaproteobacteria</taxon>
        <taxon>Hyphomicrobiales</taxon>
        <taxon>Nitrobacteraceae</taxon>
        <taxon>Bradyrhizobium</taxon>
    </lineage>
</organism>
<accession>A5EK13</accession>
<sequence>MTAIVDIIGREILDSRGNPTVEVDVVLEDGSVGRAAVPSGASTGAHEAVELRDGDKHRYLGKGVLKAVEAINDEIYEALSDMSVQDQVQIDQILIELDGTPNKSRIGANAILGVSLACAKAAAISYDMPLYRYVGGTSARTLPVPMMNIVNGGVHADNPIDFQEFMIMPVGAPSFAEALRCGSEIFHTLKGELKKAGHNTNVGDEGGFAPNLPSADAALDFVMSAIGKAGYNAGEDVMLALDCAATEFFRDGKYVYEGENKSRSRSEQARYLADLVARYPIVSIEDGMSEDDMDGWKELTDLIGSKCQLVGDDLFVTNVNRLADGIRNGRANSILIKVNQIGTLTETLAAVEMAYKAGYTAVMSHRSGETEDSTIADLAVATNCGQIKTGSLARADRTAKYNQLLRIEQELDAQARYAGRSALKALA</sequence>
<gene>
    <name evidence="1" type="primary">eno</name>
    <name type="ordered locus">BBta_4471</name>
</gene>
<proteinExistence type="inferred from homology"/>
<evidence type="ECO:0000255" key="1">
    <source>
        <dbReference type="HAMAP-Rule" id="MF_00318"/>
    </source>
</evidence>
<name>ENO_BRASB</name>
<comment type="function">
    <text evidence="1">Catalyzes the reversible conversion of 2-phosphoglycerate (2-PG) into phosphoenolpyruvate (PEP). It is essential for the degradation of carbohydrates via glycolysis.</text>
</comment>
<comment type="catalytic activity">
    <reaction evidence="1">
        <text>(2R)-2-phosphoglycerate = phosphoenolpyruvate + H2O</text>
        <dbReference type="Rhea" id="RHEA:10164"/>
        <dbReference type="ChEBI" id="CHEBI:15377"/>
        <dbReference type="ChEBI" id="CHEBI:58289"/>
        <dbReference type="ChEBI" id="CHEBI:58702"/>
        <dbReference type="EC" id="4.2.1.11"/>
    </reaction>
</comment>
<comment type="cofactor">
    <cofactor evidence="1">
        <name>Mg(2+)</name>
        <dbReference type="ChEBI" id="CHEBI:18420"/>
    </cofactor>
    <text evidence="1">Binds a second Mg(2+) ion via substrate during catalysis.</text>
</comment>
<comment type="pathway">
    <text evidence="1">Carbohydrate degradation; glycolysis; pyruvate from D-glyceraldehyde 3-phosphate: step 4/5.</text>
</comment>
<comment type="subcellular location">
    <subcellularLocation>
        <location evidence="1">Cytoplasm</location>
    </subcellularLocation>
    <subcellularLocation>
        <location evidence="1">Secreted</location>
    </subcellularLocation>
    <subcellularLocation>
        <location evidence="1">Cell surface</location>
    </subcellularLocation>
    <text evidence="1">Fractions of enolase are present in both the cytoplasm and on the cell surface.</text>
</comment>
<comment type="similarity">
    <text evidence="1">Belongs to the enolase family.</text>
</comment>